<keyword id="KW-0002">3D-structure</keyword>
<keyword id="KW-0963">Cytoplasm</keyword>
<keyword id="KW-0255">Endonuclease</keyword>
<keyword id="KW-0378">Hydrolase</keyword>
<keyword id="KW-0540">Nuclease</keyword>
<keyword id="KW-0539">Nucleus</keyword>
<keyword id="KW-1185">Reference proteome</keyword>
<keyword id="KW-0677">Repeat</keyword>
<keyword id="KW-0694">RNA-binding</keyword>
<keyword id="KW-0943">RNA-mediated gene silencing</keyword>
<name>SND1_DROME</name>
<gene>
    <name evidence="11" type="primary">Tudor-SN</name>
    <name evidence="7" type="synonym">p100</name>
    <name evidence="7" type="synonym">SND1</name>
    <name evidence="11" type="synonym">TSN</name>
    <name evidence="11" type="ORF">CG7008</name>
</gene>
<protein>
    <recommendedName>
        <fullName evidence="8">Staphylococcal nuclease domain-containing protein 1</fullName>
        <ecNumber evidence="4">3.1.31.1</ecNumber>
    </recommendedName>
    <alternativeName>
        <fullName evidence="11">Tudor staphylococcal nuclease</fullName>
    </alternativeName>
</protein>
<accession>Q9W0S7</accession>
<accession>Q8T0F1</accession>
<organism evidence="12">
    <name type="scientific">Drosophila melanogaster</name>
    <name type="common">Fruit fly</name>
    <dbReference type="NCBI Taxonomy" id="7227"/>
    <lineage>
        <taxon>Eukaryota</taxon>
        <taxon>Metazoa</taxon>
        <taxon>Ecdysozoa</taxon>
        <taxon>Arthropoda</taxon>
        <taxon>Hexapoda</taxon>
        <taxon>Insecta</taxon>
        <taxon>Pterygota</taxon>
        <taxon>Neoptera</taxon>
        <taxon>Endopterygota</taxon>
        <taxon>Diptera</taxon>
        <taxon>Brachycera</taxon>
        <taxon>Muscomorpha</taxon>
        <taxon>Ephydroidea</taxon>
        <taxon>Drosophilidae</taxon>
        <taxon>Drosophila</taxon>
        <taxon>Sophophora</taxon>
    </lineage>
</organism>
<feature type="chain" id="PRO_0000445085" description="Staphylococcal nuclease domain-containing protein 1">
    <location>
        <begin position="1"/>
        <end position="926"/>
    </location>
</feature>
<feature type="domain" description="TNase-like 1" evidence="2">
    <location>
        <begin position="23"/>
        <end position="167"/>
    </location>
</feature>
<feature type="domain" description="TNase-like 2" evidence="2">
    <location>
        <begin position="195"/>
        <end position="333"/>
    </location>
</feature>
<feature type="domain" description="TNase-like 3" evidence="2">
    <location>
        <begin position="346"/>
        <end position="505"/>
    </location>
</feature>
<feature type="domain" description="TNase-like 4" evidence="2">
    <location>
        <begin position="535"/>
        <end position="674"/>
    </location>
</feature>
<feature type="domain" description="Tudor" evidence="1">
    <location>
        <begin position="749"/>
        <end position="807"/>
    </location>
</feature>
<feature type="region of interest" description="Disordered" evidence="3">
    <location>
        <begin position="1"/>
        <end position="24"/>
    </location>
</feature>
<feature type="region of interest" description="Involved in dimethylarginine binding" evidence="5">
    <location>
        <begin position="760"/>
        <end position="788"/>
    </location>
</feature>
<feature type="compositionally biased region" description="Low complexity" evidence="3">
    <location>
        <begin position="1"/>
        <end position="17"/>
    </location>
</feature>
<feature type="mutagenesis site" description="Normal spermatogenesis." evidence="6">
    <original>I</original>
    <variation>F</variation>
    <location>
        <position position="282"/>
    </location>
</feature>
<feature type="mutagenesis site" description="Defective spermatogenesis." evidence="6">
    <original>E</original>
    <variation>K</variation>
    <location>
        <position position="320"/>
    </location>
</feature>
<feature type="mutagenesis site" description="Normal spermatogenesis." evidence="6">
    <original>G</original>
    <variation>E</variation>
    <location>
        <position position="368"/>
    </location>
</feature>
<feature type="mutagenesis site" description="Defective spermatogenesis." evidence="6">
    <location>
        <begin position="437"/>
        <end position="926"/>
    </location>
</feature>
<feature type="mutagenesis site" description="Defective spermatogenesis." evidence="6">
    <original>G</original>
    <variation>R</variation>
    <location>
        <position position="501"/>
    </location>
</feature>
<feature type="strand" evidence="14">
    <location>
        <begin position="703"/>
        <end position="710"/>
    </location>
</feature>
<feature type="strand" evidence="14">
    <location>
        <begin position="714"/>
        <end position="720"/>
    </location>
</feature>
<feature type="helix" evidence="14">
    <location>
        <begin position="721"/>
        <end position="723"/>
    </location>
</feature>
<feature type="helix" evidence="14">
    <location>
        <begin position="724"/>
        <end position="740"/>
    </location>
</feature>
<feature type="strand" evidence="14">
    <location>
        <begin position="755"/>
        <end position="759"/>
    </location>
</feature>
<feature type="turn" evidence="14">
    <location>
        <begin position="761"/>
        <end position="763"/>
    </location>
</feature>
<feature type="strand" evidence="14">
    <location>
        <begin position="766"/>
        <end position="775"/>
    </location>
</feature>
<feature type="strand" evidence="14">
    <location>
        <begin position="778"/>
        <end position="783"/>
    </location>
</feature>
<feature type="turn" evidence="14">
    <location>
        <begin position="784"/>
        <end position="786"/>
    </location>
</feature>
<feature type="strand" evidence="14">
    <location>
        <begin position="789"/>
        <end position="793"/>
    </location>
</feature>
<feature type="helix" evidence="14">
    <location>
        <begin position="794"/>
        <end position="796"/>
    </location>
</feature>
<feature type="strand" evidence="14">
    <location>
        <begin position="797"/>
        <end position="799"/>
    </location>
</feature>
<feature type="helix" evidence="14">
    <location>
        <begin position="802"/>
        <end position="804"/>
    </location>
</feature>
<feature type="strand" evidence="14">
    <location>
        <begin position="805"/>
        <end position="807"/>
    </location>
</feature>
<feature type="strand" evidence="14">
    <location>
        <begin position="810"/>
        <end position="816"/>
    </location>
</feature>
<feature type="helix" evidence="14">
    <location>
        <begin position="825"/>
        <end position="839"/>
    </location>
</feature>
<feature type="strand" evidence="14">
    <location>
        <begin position="843"/>
        <end position="850"/>
    </location>
</feature>
<feature type="strand" evidence="14">
    <location>
        <begin position="857"/>
        <end position="862"/>
    </location>
</feature>
<feature type="turn" evidence="14">
    <location>
        <begin position="864"/>
        <end position="866"/>
    </location>
</feature>
<feature type="helix" evidence="14">
    <location>
        <begin position="870"/>
        <end position="876"/>
    </location>
</feature>
<feature type="strand" evidence="14">
    <location>
        <begin position="879"/>
        <end position="882"/>
    </location>
</feature>
<feature type="helix" evidence="14">
    <location>
        <begin position="888"/>
        <end position="890"/>
    </location>
</feature>
<feature type="helix" evidence="14">
    <location>
        <begin position="891"/>
        <end position="906"/>
    </location>
</feature>
<feature type="helix" evidence="14">
    <location>
        <begin position="910"/>
        <end position="912"/>
    </location>
</feature>
<dbReference type="EC" id="3.1.31.1" evidence="4"/>
<dbReference type="EMBL" id="AE014296">
    <property type="protein sequence ID" value="AAF47366.1"/>
    <property type="molecule type" value="Genomic_DNA"/>
</dbReference>
<dbReference type="EMBL" id="AE014296">
    <property type="protein sequence ID" value="AGB93890.1"/>
    <property type="molecule type" value="Genomic_DNA"/>
</dbReference>
<dbReference type="EMBL" id="AY069361">
    <property type="protein sequence ID" value="AAL39506.1"/>
    <property type="molecule type" value="mRNA"/>
</dbReference>
<dbReference type="EMBL" id="BT003270">
    <property type="protein sequence ID" value="AAO25027.1"/>
    <property type="molecule type" value="mRNA"/>
</dbReference>
<dbReference type="RefSeq" id="NP_001261195.1">
    <property type="nucleotide sequence ID" value="NM_001274266.1"/>
</dbReference>
<dbReference type="RefSeq" id="NP_612021.1">
    <property type="nucleotide sequence ID" value="NM_138177.3"/>
</dbReference>
<dbReference type="PDB" id="2WAC">
    <property type="method" value="X-ray"/>
    <property type="resolution" value="2.10 A"/>
    <property type="chains" value="A/B=700-916"/>
</dbReference>
<dbReference type="PDBsum" id="2WAC"/>
<dbReference type="SMR" id="Q9W0S7"/>
<dbReference type="FunCoup" id="Q9W0S7">
    <property type="interactions" value="2405"/>
</dbReference>
<dbReference type="IntAct" id="Q9W0S7">
    <property type="interactions" value="193"/>
</dbReference>
<dbReference type="MINT" id="Q9W0S7"/>
<dbReference type="STRING" id="7227.FBpp0304417"/>
<dbReference type="PaxDb" id="7227-FBpp0304417"/>
<dbReference type="DNASU" id="38045"/>
<dbReference type="EnsemblMetazoa" id="FBtr0072519">
    <property type="protein sequence ID" value="FBpp0072419"/>
    <property type="gene ID" value="FBgn0035121"/>
</dbReference>
<dbReference type="EnsemblMetazoa" id="FBtr0332107">
    <property type="protein sequence ID" value="FBpp0304417"/>
    <property type="gene ID" value="FBgn0035121"/>
</dbReference>
<dbReference type="GeneID" id="38045"/>
<dbReference type="KEGG" id="dme:Dmel_CG7008"/>
<dbReference type="UCSC" id="CG7008-RA">
    <property type="organism name" value="d. melanogaster"/>
</dbReference>
<dbReference type="AGR" id="FB:FBgn0035121"/>
<dbReference type="CTD" id="38045"/>
<dbReference type="FlyBase" id="FBgn0035121">
    <property type="gene designation" value="Tudor-SN"/>
</dbReference>
<dbReference type="VEuPathDB" id="VectorBase:FBgn0035121"/>
<dbReference type="eggNOG" id="KOG2039">
    <property type="taxonomic scope" value="Eukaryota"/>
</dbReference>
<dbReference type="GeneTree" id="ENSGT00510000047270"/>
<dbReference type="HOGENOM" id="CLU_005966_0_0_1"/>
<dbReference type="InParanoid" id="Q9W0S7"/>
<dbReference type="OMA" id="ARCADHH"/>
<dbReference type="OrthoDB" id="10023235at2759"/>
<dbReference type="PhylomeDB" id="Q9W0S7"/>
<dbReference type="SignaLink" id="Q9W0S7"/>
<dbReference type="BioGRID-ORCS" id="38045">
    <property type="hits" value="0 hits in 1 CRISPR screen"/>
</dbReference>
<dbReference type="ChiTaRS" id="Pep">
    <property type="organism name" value="fly"/>
</dbReference>
<dbReference type="EvolutionaryTrace" id="Q9W0S7"/>
<dbReference type="GenomeRNAi" id="38045"/>
<dbReference type="PRO" id="PR:Q9W0S7"/>
<dbReference type="Proteomes" id="UP000000803">
    <property type="component" value="Chromosome 3L"/>
</dbReference>
<dbReference type="Bgee" id="FBgn0035121">
    <property type="expression patterns" value="Expressed in posterior terminal follicle cell in ovary and 165 other cell types or tissues"/>
</dbReference>
<dbReference type="GO" id="GO:0005737">
    <property type="term" value="C:cytoplasm"/>
    <property type="evidence" value="ECO:0000314"/>
    <property type="project" value="FlyBase"/>
</dbReference>
<dbReference type="GO" id="GO:0005829">
    <property type="term" value="C:cytosol"/>
    <property type="evidence" value="ECO:0007005"/>
    <property type="project" value="FlyBase"/>
</dbReference>
<dbReference type="GO" id="GO:0005634">
    <property type="term" value="C:nucleus"/>
    <property type="evidence" value="ECO:0000314"/>
    <property type="project" value="FlyBase"/>
</dbReference>
<dbReference type="GO" id="GO:0016442">
    <property type="term" value="C:RISC complex"/>
    <property type="evidence" value="ECO:0000314"/>
    <property type="project" value="FlyBase"/>
</dbReference>
<dbReference type="GO" id="GO:0016894">
    <property type="term" value="F:endonuclease activity, active with either ribo- or deoxyribonucleic acids and producing 3'-phosphomonoesters"/>
    <property type="evidence" value="ECO:0007669"/>
    <property type="project" value="UniProtKB-EC"/>
</dbReference>
<dbReference type="GO" id="GO:0004518">
    <property type="term" value="F:nuclease activity"/>
    <property type="evidence" value="ECO:0000314"/>
    <property type="project" value="FlyBase"/>
</dbReference>
<dbReference type="GO" id="GO:0003723">
    <property type="term" value="F:RNA binding"/>
    <property type="evidence" value="ECO:0000318"/>
    <property type="project" value="GO_Central"/>
</dbReference>
<dbReference type="GO" id="GO:0006402">
    <property type="term" value="P:mRNA catabolic process"/>
    <property type="evidence" value="ECO:0000318"/>
    <property type="project" value="GO_Central"/>
</dbReference>
<dbReference type="GO" id="GO:0031047">
    <property type="term" value="P:regulatory ncRNA-mediated gene silencing"/>
    <property type="evidence" value="ECO:0007669"/>
    <property type="project" value="UniProtKB-KW"/>
</dbReference>
<dbReference type="GO" id="GO:0007283">
    <property type="term" value="P:spermatogenesis"/>
    <property type="evidence" value="ECO:0000315"/>
    <property type="project" value="FlyBase"/>
</dbReference>
<dbReference type="CDD" id="cd00175">
    <property type="entry name" value="SNc"/>
    <property type="match status" value="2"/>
</dbReference>
<dbReference type="CDD" id="cd20433">
    <property type="entry name" value="Tudor_TDRD11"/>
    <property type="match status" value="1"/>
</dbReference>
<dbReference type="FunFam" id="2.30.30.140:FF:000018">
    <property type="entry name" value="Serine/threonine-protein kinase 31"/>
    <property type="match status" value="1"/>
</dbReference>
<dbReference type="FunFam" id="2.40.50.90:FF:000001">
    <property type="entry name" value="Staphylococcal nuclease domain-containing protein"/>
    <property type="match status" value="1"/>
</dbReference>
<dbReference type="FunFam" id="2.40.50.90:FF:000002">
    <property type="entry name" value="Staphylococcal nuclease domain-containing protein"/>
    <property type="match status" value="1"/>
</dbReference>
<dbReference type="FunFam" id="2.40.50.90:FF:000003">
    <property type="entry name" value="Staphylococcal nuclease domain-containing protein"/>
    <property type="match status" value="1"/>
</dbReference>
<dbReference type="FunFam" id="2.40.50.90:FF:000004">
    <property type="entry name" value="Staphylococcal nuclease domain-containing protein"/>
    <property type="match status" value="1"/>
</dbReference>
<dbReference type="FunFam" id="2.40.50.90:FF:000005">
    <property type="entry name" value="Staphylococcal nuclease domain-containing protein"/>
    <property type="match status" value="1"/>
</dbReference>
<dbReference type="Gene3D" id="2.30.30.140">
    <property type="match status" value="1"/>
</dbReference>
<dbReference type="Gene3D" id="2.40.50.90">
    <property type="match status" value="5"/>
</dbReference>
<dbReference type="InterPro" id="IPR016685">
    <property type="entry name" value="Silence_cplx_Nase-comp_TudorSN"/>
</dbReference>
<dbReference type="InterPro" id="IPR035437">
    <property type="entry name" value="SNase_OB-fold_sf"/>
</dbReference>
<dbReference type="InterPro" id="IPR016071">
    <property type="entry name" value="Staphylococal_nuclease_OB-fold"/>
</dbReference>
<dbReference type="InterPro" id="IPR002999">
    <property type="entry name" value="Tudor"/>
</dbReference>
<dbReference type="InterPro" id="IPR047386">
    <property type="entry name" value="Tudor_TDRD11"/>
</dbReference>
<dbReference type="PANTHER" id="PTHR12302">
    <property type="entry name" value="EBNA2 BINDING PROTEIN P100"/>
    <property type="match status" value="1"/>
</dbReference>
<dbReference type="PANTHER" id="PTHR12302:SF2">
    <property type="entry name" value="STAPHYLOCOCCAL NUCLEASE DOMAIN-CONTAINING PROTEIN 1"/>
    <property type="match status" value="1"/>
</dbReference>
<dbReference type="Pfam" id="PF00565">
    <property type="entry name" value="SNase"/>
    <property type="match status" value="4"/>
</dbReference>
<dbReference type="Pfam" id="PF00567">
    <property type="entry name" value="TUDOR"/>
    <property type="match status" value="1"/>
</dbReference>
<dbReference type="PIRSF" id="PIRSF017179">
    <property type="entry name" value="RISC-Tudor-SN"/>
    <property type="match status" value="1"/>
</dbReference>
<dbReference type="SMART" id="SM00318">
    <property type="entry name" value="SNc"/>
    <property type="match status" value="4"/>
</dbReference>
<dbReference type="SMART" id="SM00333">
    <property type="entry name" value="TUDOR"/>
    <property type="match status" value="1"/>
</dbReference>
<dbReference type="SUPFAM" id="SSF50199">
    <property type="entry name" value="Staphylococcal nuclease"/>
    <property type="match status" value="5"/>
</dbReference>
<dbReference type="SUPFAM" id="SSF63748">
    <property type="entry name" value="Tudor/PWWP/MBT"/>
    <property type="match status" value="1"/>
</dbReference>
<dbReference type="PROSITE" id="PS50830">
    <property type="entry name" value="TNASE_3"/>
    <property type="match status" value="4"/>
</dbReference>
<dbReference type="PROSITE" id="PS50304">
    <property type="entry name" value="TUDOR"/>
    <property type="match status" value="1"/>
</dbReference>
<comment type="function">
    <text evidence="4 6">Endonuclease which shows activity towards both DNA and RNA substrates (PubMed:14508492, PubMed:26808625). Has a role in translation regulation throught its association with the with the RNA-induced silencing complex (RISC) (PubMed:14508492, PubMed:26808625). Plays a role in spermatogenesis probably by negatively regulating piwi expression in the germline (PubMed:26808625). Together with piwi, might be involved in transposon repression in the germline (PubMed:26808625).</text>
</comment>
<comment type="catalytic activity">
    <reaction evidence="4">
        <text>Endonucleolytic cleavage to nucleoside 3'-phosphates and 3'-phosphooligonucleotide end-products.</text>
        <dbReference type="EC" id="3.1.31.1"/>
    </reaction>
</comment>
<comment type="subunit">
    <text evidence="4 6">Associates with the RNA-induced silencing complex (RISC) (PubMed:14508492). Interacts with the RISC components AGO2, Fmr1 and vig (PubMed:14508492). Interacts with piwi (PubMed:26808625).</text>
</comment>
<comment type="subcellular location">
    <subcellularLocation>
        <location evidence="4 6">Cytoplasm</location>
    </subcellularLocation>
    <subcellularLocation>
        <location evidence="4 6">Nucleus</location>
    </subcellularLocation>
    <text evidence="4">Associates with ribosomes.</text>
</comment>
<comment type="tissue specificity">
    <text evidence="6">Expressed in adult ovaries and testis (at protein level).</text>
</comment>
<comment type="developmental stage">
    <text evidence="6">Expressed in both germline and somatic cells during oogenesis and spermatogenesis (at protein level).</text>
</comment>
<comment type="domain">
    <text evidence="5">Tudor domain specifically binds peptides with symmetrically dimethylated arginines (sDMA) and may facilitate protein-protein interactions.</text>
</comment>
<comment type="disruption phenotype">
    <text evidence="6">RNAi-mediated knockdown results in defective spermatogenesis.</text>
</comment>
<proteinExistence type="evidence at protein level"/>
<reference evidence="12" key="1">
    <citation type="journal article" date="2000" name="Science">
        <title>The genome sequence of Drosophila melanogaster.</title>
        <authorList>
            <person name="Adams M.D."/>
            <person name="Celniker S.E."/>
            <person name="Holt R.A."/>
            <person name="Evans C.A."/>
            <person name="Gocayne J.D."/>
            <person name="Amanatides P.G."/>
            <person name="Scherer S.E."/>
            <person name="Li P.W."/>
            <person name="Hoskins R.A."/>
            <person name="Galle R.F."/>
            <person name="George R.A."/>
            <person name="Lewis S.E."/>
            <person name="Richards S."/>
            <person name="Ashburner M."/>
            <person name="Henderson S.N."/>
            <person name="Sutton G.G."/>
            <person name="Wortman J.R."/>
            <person name="Yandell M.D."/>
            <person name="Zhang Q."/>
            <person name="Chen L.X."/>
            <person name="Brandon R.C."/>
            <person name="Rogers Y.-H.C."/>
            <person name="Blazej R.G."/>
            <person name="Champe M."/>
            <person name="Pfeiffer B.D."/>
            <person name="Wan K.H."/>
            <person name="Doyle C."/>
            <person name="Baxter E.G."/>
            <person name="Helt G."/>
            <person name="Nelson C.R."/>
            <person name="Miklos G.L.G."/>
            <person name="Abril J.F."/>
            <person name="Agbayani A."/>
            <person name="An H.-J."/>
            <person name="Andrews-Pfannkoch C."/>
            <person name="Baldwin D."/>
            <person name="Ballew R.M."/>
            <person name="Basu A."/>
            <person name="Baxendale J."/>
            <person name="Bayraktaroglu L."/>
            <person name="Beasley E.M."/>
            <person name="Beeson K.Y."/>
            <person name="Benos P.V."/>
            <person name="Berman B.P."/>
            <person name="Bhandari D."/>
            <person name="Bolshakov S."/>
            <person name="Borkova D."/>
            <person name="Botchan M.R."/>
            <person name="Bouck J."/>
            <person name="Brokstein P."/>
            <person name="Brottier P."/>
            <person name="Burtis K.C."/>
            <person name="Busam D.A."/>
            <person name="Butler H."/>
            <person name="Cadieu E."/>
            <person name="Center A."/>
            <person name="Chandra I."/>
            <person name="Cherry J.M."/>
            <person name="Cawley S."/>
            <person name="Dahlke C."/>
            <person name="Davenport L.B."/>
            <person name="Davies P."/>
            <person name="de Pablos B."/>
            <person name="Delcher A."/>
            <person name="Deng Z."/>
            <person name="Mays A.D."/>
            <person name="Dew I."/>
            <person name="Dietz S.M."/>
            <person name="Dodson K."/>
            <person name="Doup L.E."/>
            <person name="Downes M."/>
            <person name="Dugan-Rocha S."/>
            <person name="Dunkov B.C."/>
            <person name="Dunn P."/>
            <person name="Durbin K.J."/>
            <person name="Evangelista C.C."/>
            <person name="Ferraz C."/>
            <person name="Ferriera S."/>
            <person name="Fleischmann W."/>
            <person name="Fosler C."/>
            <person name="Gabrielian A.E."/>
            <person name="Garg N.S."/>
            <person name="Gelbart W.M."/>
            <person name="Glasser K."/>
            <person name="Glodek A."/>
            <person name="Gong F."/>
            <person name="Gorrell J.H."/>
            <person name="Gu Z."/>
            <person name="Guan P."/>
            <person name="Harris M."/>
            <person name="Harris N.L."/>
            <person name="Harvey D.A."/>
            <person name="Heiman T.J."/>
            <person name="Hernandez J.R."/>
            <person name="Houck J."/>
            <person name="Hostin D."/>
            <person name="Houston K.A."/>
            <person name="Howland T.J."/>
            <person name="Wei M.-H."/>
            <person name="Ibegwam C."/>
            <person name="Jalali M."/>
            <person name="Kalush F."/>
            <person name="Karpen G.H."/>
            <person name="Ke Z."/>
            <person name="Kennison J.A."/>
            <person name="Ketchum K.A."/>
            <person name="Kimmel B.E."/>
            <person name="Kodira C.D."/>
            <person name="Kraft C.L."/>
            <person name="Kravitz S."/>
            <person name="Kulp D."/>
            <person name="Lai Z."/>
            <person name="Lasko P."/>
            <person name="Lei Y."/>
            <person name="Levitsky A.A."/>
            <person name="Li J.H."/>
            <person name="Li Z."/>
            <person name="Liang Y."/>
            <person name="Lin X."/>
            <person name="Liu X."/>
            <person name="Mattei B."/>
            <person name="McIntosh T.C."/>
            <person name="McLeod M.P."/>
            <person name="McPherson D."/>
            <person name="Merkulov G."/>
            <person name="Milshina N.V."/>
            <person name="Mobarry C."/>
            <person name="Morris J."/>
            <person name="Moshrefi A."/>
            <person name="Mount S.M."/>
            <person name="Moy M."/>
            <person name="Murphy B."/>
            <person name="Murphy L."/>
            <person name="Muzny D.M."/>
            <person name="Nelson D.L."/>
            <person name="Nelson D.R."/>
            <person name="Nelson K.A."/>
            <person name="Nixon K."/>
            <person name="Nusskern D.R."/>
            <person name="Pacleb J.M."/>
            <person name="Palazzolo M."/>
            <person name="Pittman G.S."/>
            <person name="Pan S."/>
            <person name="Pollard J."/>
            <person name="Puri V."/>
            <person name="Reese M.G."/>
            <person name="Reinert K."/>
            <person name="Remington K."/>
            <person name="Saunders R.D.C."/>
            <person name="Scheeler F."/>
            <person name="Shen H."/>
            <person name="Shue B.C."/>
            <person name="Siden-Kiamos I."/>
            <person name="Simpson M."/>
            <person name="Skupski M.P."/>
            <person name="Smith T.J."/>
            <person name="Spier E."/>
            <person name="Spradling A.C."/>
            <person name="Stapleton M."/>
            <person name="Strong R."/>
            <person name="Sun E."/>
            <person name="Svirskas R."/>
            <person name="Tector C."/>
            <person name="Turner R."/>
            <person name="Venter E."/>
            <person name="Wang A.H."/>
            <person name="Wang X."/>
            <person name="Wang Z.-Y."/>
            <person name="Wassarman D.A."/>
            <person name="Weinstock G.M."/>
            <person name="Weissenbach J."/>
            <person name="Williams S.M."/>
            <person name="Woodage T."/>
            <person name="Worley K.C."/>
            <person name="Wu D."/>
            <person name="Yang S."/>
            <person name="Yao Q.A."/>
            <person name="Ye J."/>
            <person name="Yeh R.-F."/>
            <person name="Zaveri J.S."/>
            <person name="Zhan M."/>
            <person name="Zhang G."/>
            <person name="Zhao Q."/>
            <person name="Zheng L."/>
            <person name="Zheng X.H."/>
            <person name="Zhong F.N."/>
            <person name="Zhong W."/>
            <person name="Zhou X."/>
            <person name="Zhu S.C."/>
            <person name="Zhu X."/>
            <person name="Smith H.O."/>
            <person name="Gibbs R.A."/>
            <person name="Myers E.W."/>
            <person name="Rubin G.M."/>
            <person name="Venter J.C."/>
        </authorList>
    </citation>
    <scope>NUCLEOTIDE SEQUENCE [LARGE SCALE GENOMIC DNA]</scope>
    <source>
        <strain evidence="12">Berkeley</strain>
    </source>
</reference>
<reference evidence="12" key="2">
    <citation type="journal article" date="2002" name="Genome Biol.">
        <title>Annotation of the Drosophila melanogaster euchromatic genome: a systematic review.</title>
        <authorList>
            <person name="Misra S."/>
            <person name="Crosby M.A."/>
            <person name="Mungall C.J."/>
            <person name="Matthews B.B."/>
            <person name="Campbell K.S."/>
            <person name="Hradecky P."/>
            <person name="Huang Y."/>
            <person name="Kaminker J.S."/>
            <person name="Millburn G.H."/>
            <person name="Prochnik S.E."/>
            <person name="Smith C.D."/>
            <person name="Tupy J.L."/>
            <person name="Whitfield E.J."/>
            <person name="Bayraktaroglu L."/>
            <person name="Berman B.P."/>
            <person name="Bettencourt B.R."/>
            <person name="Celniker S.E."/>
            <person name="de Grey A.D.N.J."/>
            <person name="Drysdale R.A."/>
            <person name="Harris N.L."/>
            <person name="Richter J."/>
            <person name="Russo S."/>
            <person name="Schroeder A.J."/>
            <person name="Shu S.Q."/>
            <person name="Stapleton M."/>
            <person name="Yamada C."/>
            <person name="Ashburner M."/>
            <person name="Gelbart W.M."/>
            <person name="Rubin G.M."/>
            <person name="Lewis S.E."/>
        </authorList>
    </citation>
    <scope>GENOME REANNOTATION</scope>
    <source>
        <strain evidence="12">Berkeley</strain>
    </source>
</reference>
<reference evidence="9" key="3">
    <citation type="journal article" date="2002" name="Genome Biol.">
        <title>A Drosophila full-length cDNA resource.</title>
        <authorList>
            <person name="Stapleton M."/>
            <person name="Carlson J.W."/>
            <person name="Brokstein P."/>
            <person name="Yu C."/>
            <person name="Champe M."/>
            <person name="George R.A."/>
            <person name="Guarin H."/>
            <person name="Kronmiller B."/>
            <person name="Pacleb J.M."/>
            <person name="Park S."/>
            <person name="Wan K.H."/>
            <person name="Rubin G.M."/>
            <person name="Celniker S.E."/>
        </authorList>
    </citation>
    <scope>NUCLEOTIDE SEQUENCE [LARGE SCALE MRNA]</scope>
    <source>
        <strain evidence="9">Berkeley</strain>
        <tissue evidence="9">Embryo</tissue>
    </source>
</reference>
<reference evidence="10" key="4">
    <citation type="submission" date="2003-01" db="EMBL/GenBank/DDBJ databases">
        <authorList>
            <person name="Stapleton M."/>
            <person name="Brokstein P."/>
            <person name="Hong L."/>
            <person name="Agbayani A."/>
            <person name="Carlson J."/>
            <person name="Champe M."/>
            <person name="Chavez C."/>
            <person name="Dorsett V."/>
            <person name="Dresnek D."/>
            <person name="Farfan D."/>
            <person name="Frise E."/>
            <person name="George R."/>
            <person name="Gonzalez M."/>
            <person name="Guarin H."/>
            <person name="Kronmiller B."/>
            <person name="Li P."/>
            <person name="Liao G."/>
            <person name="Miranda A."/>
            <person name="Mungall C.J."/>
            <person name="Nunoo J."/>
            <person name="Pacleb J."/>
            <person name="Paragas V."/>
            <person name="Park S."/>
            <person name="Patel S."/>
            <person name="Phouanenavong S."/>
            <person name="Wan K."/>
            <person name="Yu C."/>
            <person name="Lewis S.E."/>
            <person name="Rubin G.M."/>
            <person name="Celniker S."/>
        </authorList>
    </citation>
    <scope>NUCLEOTIDE SEQUENCE [LARGE SCALE MRNA]</scope>
    <source>
        <strain evidence="10">Berkeley</strain>
        <tissue evidence="10">Embryo</tissue>
    </source>
</reference>
<reference evidence="8" key="5">
    <citation type="journal article" date="2003" name="Nature">
        <title>A micrococcal nuclease homologue in RNAi effector complexes.</title>
        <authorList>
            <person name="Caudy A.A."/>
            <person name="Ketting R.F."/>
            <person name="Hammond S.M."/>
            <person name="Denli A.M."/>
            <person name="Bathoorn A.M."/>
            <person name="Tops B.B."/>
            <person name="Silva J.M."/>
            <person name="Myers M.M."/>
            <person name="Hannon G.J."/>
            <person name="Plasterk R.H."/>
        </authorList>
    </citation>
    <scope>FUNCTION</scope>
    <scope>CATALYTIC ACTIVITY</scope>
    <scope>ASSOCIATION WITH THE RISC COMPLEX</scope>
    <scope>INTERACTION WITH AGO2; FMR1 AND VIG</scope>
    <scope>SUBCELLULAR LOCATION</scope>
    <scope>IDENTIFICATION BY MASS SPECTROMETRY</scope>
</reference>
<reference evidence="8" key="6">
    <citation type="journal article" date="2016" name="PLoS Genet.">
        <title>Tudor-SN Interacts with Piwi Antagonistically in Regulating Spermatogenesis but Synergistically in Silencing Transposons in Drosophila.</title>
        <authorList>
            <person name="Ku H.Y."/>
            <person name="Gangaraju V.K."/>
            <person name="Qi H."/>
            <person name="Liu N."/>
            <person name="Lin H."/>
        </authorList>
    </citation>
    <scope>FUNCTION</scope>
    <scope>INTERACTION WITH PIWI</scope>
    <scope>SUBCELLULAR LOCATION</scope>
    <scope>TISSUE SPECIFICITY</scope>
    <scope>DEVELOPMENTAL STAGE</scope>
    <scope>DISRUPTION PHENOTYPE</scope>
    <scope>MUTAGENESIS OF ILE-282; GLU-320; GLY-368; 437-ILE--ARG-926 AND GLY-501</scope>
</reference>
<reference evidence="13" key="7">
    <citation type="journal article" date="2009" name="J. Mol. Biol.">
        <title>Structure and ligand binding of the extended Tudor domain of D. melanogaster Tudor-SN.</title>
        <authorList>
            <person name="Friberg A."/>
            <person name="Corsini L."/>
            <person name="Mourao A."/>
            <person name="Sattler M."/>
        </authorList>
    </citation>
    <scope>X-RAY CRYSTALLOGRAPHY (2.10 ANGSTROMS) OF 700-916</scope>
    <scope>DOMAIN</scope>
</reference>
<evidence type="ECO:0000255" key="1">
    <source>
        <dbReference type="PROSITE-ProRule" id="PRU00211"/>
    </source>
</evidence>
<evidence type="ECO:0000255" key="2">
    <source>
        <dbReference type="PROSITE-ProRule" id="PRU00272"/>
    </source>
</evidence>
<evidence type="ECO:0000256" key="3">
    <source>
        <dbReference type="SAM" id="MobiDB-lite"/>
    </source>
</evidence>
<evidence type="ECO:0000269" key="4">
    <source>
    </source>
</evidence>
<evidence type="ECO:0000269" key="5">
    <source>
    </source>
</evidence>
<evidence type="ECO:0000269" key="6">
    <source>
    </source>
</evidence>
<evidence type="ECO:0000303" key="7">
    <source>
    </source>
</evidence>
<evidence type="ECO:0000305" key="8"/>
<evidence type="ECO:0000312" key="9">
    <source>
        <dbReference type="EMBL" id="AAL39506.1"/>
    </source>
</evidence>
<evidence type="ECO:0000312" key="10">
    <source>
        <dbReference type="EMBL" id="AAO25027.1"/>
    </source>
</evidence>
<evidence type="ECO:0000312" key="11">
    <source>
        <dbReference type="FlyBase" id="FBgn0035121"/>
    </source>
</evidence>
<evidence type="ECO:0000312" key="12">
    <source>
        <dbReference type="Proteomes" id="UP000000803"/>
    </source>
</evidence>
<evidence type="ECO:0007744" key="13">
    <source>
        <dbReference type="PDB" id="2WAC"/>
    </source>
</evidence>
<evidence type="ECO:0007829" key="14">
    <source>
        <dbReference type="PDB" id="2WAC"/>
    </source>
</evidence>
<sequence length="926" mass="103100">MATAANTATAAGAAKDAPPAPTKSLSGIVKQVLSGDTVVIRATKGAPPPEKQITFSHVLAPKLARRPGAGGDETKDEPWAWESREFLRKKLIGVEVTFTFDKPANSNREYGFVWIGKDKETGENVVESIVREGLVSVRREGRPTAEQQTLIELEDQARAAGRGKWSPTASAADKVRNIKWSHENPAHLVDIYGGNPVKAIIEHVRDGSTVRAFLLPDFHYITLMISGIRCPGVKLDADGKPDLSVKVPFADEARYYVETRLLQRDVEIRLESVNNSNFIGTILYPKGNIAESLLREGLAKCVDWSMAVMKTGTDKLRAAERFAKEKRLRQWQDYQAKTPAFNSKEKDFSGTVVEVFNGDAINVRLSNGQVKKVFFSSIRPPRDQRAVVGTDGEEIVKAPPRGKNYRPLYEIPHMFDAREFLRKKLINKKVQCNLDYISPPRENFPEKYCYTVSIGGQNVAEAMVAKGLATCVRYRQDDDQRSSAYDQLIAAEQQAIKGLKGLHAKKDNATLRVNDLTVDHSRIKVQYLPSWQRALRTEAIVEFVASGSRLRIFVPKDSCLVTFLLAGISCPRSSRPALNGVPAQEGEPFGDEALTFTRERVLQRDVSVHIDTTDKAGSSVIGWLWTDSGANLSVALVEEGLAEVHFSAEKSEYYRQLKIAEDRAKAAKKNIWTNYVEEVPKEKTVTEEEKEDKVVAERKVNYENVIVTEITETLTFFAQSVESGSKLESLMSKLHADFQSNPPIAGSYTPKRGDLVAAQFTLDNQWYRAKVERVQGSNATVLYIDYGNKETLPTNRLAALPPAFSSEKPYATEYALALVALPTDNEDKEEALRAFSEDVLNHKVQLNVELKVTGSPNLATLRDPTTKVDFGKQLVAEGLVLAEQRGERKLKELVDQYKAAQEAARVAHLAIWKYGDITQDDAPEFR</sequence>